<dbReference type="EC" id="2.7.11.22"/>
<dbReference type="EMBL" id="BC031778">
    <property type="protein sequence ID" value="AAH31778.1"/>
    <property type="status" value="ALT_INIT"/>
    <property type="molecule type" value="mRNA"/>
</dbReference>
<dbReference type="EMBL" id="BC064815">
    <property type="protein sequence ID" value="AAH64815.1"/>
    <property type="molecule type" value="mRNA"/>
</dbReference>
<dbReference type="CCDS" id="CCDS48670.1">
    <molecule id="Q8K0D0-1"/>
</dbReference>
<dbReference type="RefSeq" id="NP_666351.2">
    <molecule id="Q8K0D0-1"/>
    <property type="nucleotide sequence ID" value="NM_146239.2"/>
</dbReference>
<dbReference type="RefSeq" id="XP_006513690.1">
    <molecule id="Q8K0D0-1"/>
    <property type="nucleotide sequence ID" value="XM_006513627.4"/>
</dbReference>
<dbReference type="RefSeq" id="XP_011241749.1">
    <molecule id="Q8K0D0-1"/>
    <property type="nucleotide sequence ID" value="XM_011243447.3"/>
</dbReference>
<dbReference type="RefSeq" id="XP_036011673.1">
    <molecule id="Q8K0D0-2"/>
    <property type="nucleotide sequence ID" value="XM_036155780.1"/>
</dbReference>
<dbReference type="SMR" id="Q8K0D0"/>
<dbReference type="BioGRID" id="231880">
    <property type="interactions" value="4"/>
</dbReference>
<dbReference type="FunCoup" id="Q8K0D0">
    <property type="interactions" value="4204"/>
</dbReference>
<dbReference type="IntAct" id="Q8K0D0">
    <property type="interactions" value="1"/>
</dbReference>
<dbReference type="MINT" id="Q8K0D0"/>
<dbReference type="STRING" id="10090.ENSMUSP00000070355"/>
<dbReference type="iPTMnet" id="Q8K0D0"/>
<dbReference type="PhosphoSitePlus" id="Q8K0D0"/>
<dbReference type="SwissPalm" id="Q8K0D0"/>
<dbReference type="jPOST" id="Q8K0D0"/>
<dbReference type="PaxDb" id="10090-ENSMUSP00000070355"/>
<dbReference type="ProteomicsDB" id="281295">
    <molecule id="Q8K0D0-1"/>
</dbReference>
<dbReference type="ProteomicsDB" id="281296">
    <molecule id="Q8K0D0-2"/>
</dbReference>
<dbReference type="Pumba" id="Q8K0D0"/>
<dbReference type="Antibodypedia" id="17666">
    <property type="antibodies" value="155 antibodies from 28 providers"/>
</dbReference>
<dbReference type="DNASU" id="237459"/>
<dbReference type="Ensembl" id="ENSMUST00000069965.9">
    <molecule id="Q8K0D0-1"/>
    <property type="protein sequence ID" value="ENSMUSP00000070355.8"/>
    <property type="gene ID" value="ENSMUSG00000020015.11"/>
</dbReference>
<dbReference type="GeneID" id="237459"/>
<dbReference type="KEGG" id="mmu:237459"/>
<dbReference type="UCSC" id="uc007gul.2">
    <molecule id="Q8K0D0-1"/>
    <property type="organism name" value="mouse"/>
</dbReference>
<dbReference type="AGR" id="MGI:97517"/>
<dbReference type="CTD" id="5128"/>
<dbReference type="MGI" id="MGI:97517">
    <property type="gene designation" value="Cdk17"/>
</dbReference>
<dbReference type="VEuPathDB" id="HostDB:ENSMUSG00000020015"/>
<dbReference type="eggNOG" id="KOG0594">
    <property type="taxonomic scope" value="Eukaryota"/>
</dbReference>
<dbReference type="GeneTree" id="ENSGT00940000155834"/>
<dbReference type="HOGENOM" id="CLU_000288_154_3_1"/>
<dbReference type="InParanoid" id="Q8K0D0"/>
<dbReference type="OMA" id="TGPGKNR"/>
<dbReference type="PhylomeDB" id="Q8K0D0"/>
<dbReference type="TreeFam" id="TF106508"/>
<dbReference type="BioGRID-ORCS" id="237459">
    <property type="hits" value="0 hits in 80 CRISPR screens"/>
</dbReference>
<dbReference type="CD-CODE" id="CE726F99">
    <property type="entry name" value="Postsynaptic density"/>
</dbReference>
<dbReference type="ChiTaRS" id="Cdk17">
    <property type="organism name" value="mouse"/>
</dbReference>
<dbReference type="PRO" id="PR:Q8K0D0"/>
<dbReference type="Proteomes" id="UP000000589">
    <property type="component" value="Chromosome 10"/>
</dbReference>
<dbReference type="RNAct" id="Q8K0D0">
    <property type="molecule type" value="protein"/>
</dbReference>
<dbReference type="Bgee" id="ENSMUSG00000020015">
    <property type="expression patterns" value="Expressed in olfactory tubercle and 225 other cell types or tissues"/>
</dbReference>
<dbReference type="ExpressionAtlas" id="Q8K0D0">
    <property type="expression patterns" value="baseline and differential"/>
</dbReference>
<dbReference type="GO" id="GO:0005524">
    <property type="term" value="F:ATP binding"/>
    <property type="evidence" value="ECO:0007669"/>
    <property type="project" value="UniProtKB-KW"/>
</dbReference>
<dbReference type="GO" id="GO:0004693">
    <property type="term" value="F:cyclin-dependent protein serine/threonine kinase activity"/>
    <property type="evidence" value="ECO:0007669"/>
    <property type="project" value="UniProtKB-EC"/>
</dbReference>
<dbReference type="GO" id="GO:0106310">
    <property type="term" value="F:protein serine kinase activity"/>
    <property type="evidence" value="ECO:0007669"/>
    <property type="project" value="RHEA"/>
</dbReference>
<dbReference type="CDD" id="cd07872">
    <property type="entry name" value="STKc_PCTAIRE2"/>
    <property type="match status" value="1"/>
</dbReference>
<dbReference type="FunFam" id="3.30.200.20:FF:000007">
    <property type="entry name" value="Cyclin-dependent kinase 14, putative"/>
    <property type="match status" value="1"/>
</dbReference>
<dbReference type="FunFam" id="1.10.510.10:FF:000061">
    <property type="entry name" value="Putative cyclin-dependent kinase 17"/>
    <property type="match status" value="1"/>
</dbReference>
<dbReference type="Gene3D" id="3.30.200.20">
    <property type="entry name" value="Phosphorylase Kinase, domain 1"/>
    <property type="match status" value="1"/>
</dbReference>
<dbReference type="Gene3D" id="1.10.510.10">
    <property type="entry name" value="Transferase(Phosphotransferase) domain 1"/>
    <property type="match status" value="1"/>
</dbReference>
<dbReference type="InterPro" id="IPR050108">
    <property type="entry name" value="CDK"/>
</dbReference>
<dbReference type="InterPro" id="IPR011009">
    <property type="entry name" value="Kinase-like_dom_sf"/>
</dbReference>
<dbReference type="InterPro" id="IPR000719">
    <property type="entry name" value="Prot_kinase_dom"/>
</dbReference>
<dbReference type="InterPro" id="IPR017441">
    <property type="entry name" value="Protein_kinase_ATP_BS"/>
</dbReference>
<dbReference type="InterPro" id="IPR008271">
    <property type="entry name" value="Ser/Thr_kinase_AS"/>
</dbReference>
<dbReference type="PANTHER" id="PTHR24056">
    <property type="entry name" value="CELL DIVISION PROTEIN KINASE"/>
    <property type="match status" value="1"/>
</dbReference>
<dbReference type="PANTHER" id="PTHR24056:SF128">
    <property type="entry name" value="CYCLIN-DEPENDENT KINASE 17"/>
    <property type="match status" value="1"/>
</dbReference>
<dbReference type="Pfam" id="PF00069">
    <property type="entry name" value="Pkinase"/>
    <property type="match status" value="1"/>
</dbReference>
<dbReference type="SMART" id="SM00220">
    <property type="entry name" value="S_TKc"/>
    <property type="match status" value="1"/>
</dbReference>
<dbReference type="SUPFAM" id="SSF56112">
    <property type="entry name" value="Protein kinase-like (PK-like)"/>
    <property type="match status" value="1"/>
</dbReference>
<dbReference type="PROSITE" id="PS00107">
    <property type="entry name" value="PROTEIN_KINASE_ATP"/>
    <property type="match status" value="1"/>
</dbReference>
<dbReference type="PROSITE" id="PS50011">
    <property type="entry name" value="PROTEIN_KINASE_DOM"/>
    <property type="match status" value="1"/>
</dbReference>
<dbReference type="PROSITE" id="PS00108">
    <property type="entry name" value="PROTEIN_KINASE_ST"/>
    <property type="match status" value="1"/>
</dbReference>
<organism>
    <name type="scientific">Mus musculus</name>
    <name type="common">Mouse</name>
    <dbReference type="NCBI Taxonomy" id="10090"/>
    <lineage>
        <taxon>Eukaryota</taxon>
        <taxon>Metazoa</taxon>
        <taxon>Chordata</taxon>
        <taxon>Craniata</taxon>
        <taxon>Vertebrata</taxon>
        <taxon>Euteleostomi</taxon>
        <taxon>Mammalia</taxon>
        <taxon>Eutheria</taxon>
        <taxon>Euarchontoglires</taxon>
        <taxon>Glires</taxon>
        <taxon>Rodentia</taxon>
        <taxon>Myomorpha</taxon>
        <taxon>Muroidea</taxon>
        <taxon>Muridae</taxon>
        <taxon>Murinae</taxon>
        <taxon>Mus</taxon>
        <taxon>Mus</taxon>
    </lineage>
</organism>
<gene>
    <name type="primary">Cdk17</name>
    <name type="synonym">Pctaire2</name>
    <name type="synonym">Pctk2</name>
</gene>
<proteinExistence type="evidence at protein level"/>
<accession>Q8K0D0</accession>
<keyword id="KW-0025">Alternative splicing</keyword>
<keyword id="KW-0067">ATP-binding</keyword>
<keyword id="KW-0418">Kinase</keyword>
<keyword id="KW-0547">Nucleotide-binding</keyword>
<keyword id="KW-0597">Phosphoprotein</keyword>
<keyword id="KW-1185">Reference proteome</keyword>
<keyword id="KW-0723">Serine/threonine-protein kinase</keyword>
<keyword id="KW-0808">Transferase</keyword>
<feature type="chain" id="PRO_0000086488" description="Cyclin-dependent kinase 17">
    <location>
        <begin position="1"/>
        <end position="523"/>
    </location>
</feature>
<feature type="domain" description="Protein kinase" evidence="3">
    <location>
        <begin position="192"/>
        <end position="473"/>
    </location>
</feature>
<feature type="region of interest" description="Disordered" evidence="5">
    <location>
        <begin position="30"/>
        <end position="55"/>
    </location>
</feature>
<feature type="region of interest" description="Disordered" evidence="5">
    <location>
        <begin position="103"/>
        <end position="123"/>
    </location>
</feature>
<feature type="region of interest" description="Disordered" evidence="5">
    <location>
        <begin position="501"/>
        <end position="523"/>
    </location>
</feature>
<feature type="compositionally biased region" description="Polar residues" evidence="5">
    <location>
        <begin position="110"/>
        <end position="123"/>
    </location>
</feature>
<feature type="compositionally biased region" description="Basic residues" evidence="5">
    <location>
        <begin position="514"/>
        <end position="523"/>
    </location>
</feature>
<feature type="active site" description="Proton acceptor" evidence="3 4">
    <location>
        <position position="313"/>
    </location>
</feature>
<feature type="binding site" evidence="3">
    <location>
        <begin position="198"/>
        <end position="206"/>
    </location>
    <ligand>
        <name>ATP</name>
        <dbReference type="ChEBI" id="CHEBI:30616"/>
    </ligand>
</feature>
<feature type="binding site" evidence="3">
    <location>
        <position position="221"/>
    </location>
    <ligand>
        <name>ATP</name>
        <dbReference type="ChEBI" id="CHEBI:30616"/>
    </ligand>
</feature>
<feature type="modified residue" description="Phosphoserine" evidence="2">
    <location>
        <position position="9"/>
    </location>
</feature>
<feature type="modified residue" description="Phosphoserine" evidence="2">
    <location>
        <position position="80"/>
    </location>
</feature>
<feature type="modified residue" description="Phosphoserine" evidence="2">
    <location>
        <position position="92"/>
    </location>
</feature>
<feature type="modified residue" description="Phosphoserine" evidence="2">
    <location>
        <position position="105"/>
    </location>
</feature>
<feature type="modified residue" description="Phosphoserine" evidence="9">
    <location>
        <position position="137"/>
    </location>
</feature>
<feature type="modified residue" description="Phosphoserine" evidence="2">
    <location>
        <position position="146"/>
    </location>
</feature>
<feature type="modified residue" description="Phosphoserine" evidence="9">
    <location>
        <position position="165"/>
    </location>
</feature>
<feature type="modified residue" description="Phosphoserine" evidence="9 10">
    <location>
        <position position="180"/>
    </location>
</feature>
<feature type="splice variant" id="VSP_010640" description="In isoform 2." evidence="7">
    <location>
        <begin position="1"/>
        <end position="84"/>
    </location>
</feature>
<feature type="splice variant" id="VSP_010641" description="In isoform 2." evidence="7">
    <original>GHGKNRRQSMLF</original>
    <variation>ALS</variation>
    <location>
        <begin position="512"/>
        <end position="523"/>
    </location>
</feature>
<reference key="1">
    <citation type="journal article" date="2004" name="Genome Res.">
        <title>The status, quality, and expansion of the NIH full-length cDNA project: the Mammalian Gene Collection (MGC).</title>
        <authorList>
            <consortium name="The MGC Project Team"/>
        </authorList>
    </citation>
    <scope>NUCLEOTIDE SEQUENCE [LARGE SCALE MRNA] (ISOFORMS 1 AND 2)</scope>
    <source>
        <tissue>Limb</tissue>
        <tissue>Retina</tissue>
    </source>
</reference>
<reference key="2">
    <citation type="journal article" date="2001" name="Biochem. Biophys. Res. Commun.">
        <title>ik3-1/Cables is associated with Trap and Pctaire2.</title>
        <authorList>
            <person name="Yamochi T."/>
            <person name="Nishimoto I."/>
            <person name="Okuda T."/>
            <person name="Matsuoka M."/>
        </authorList>
    </citation>
    <scope>IDENTIFICATION IN A COMPLEX WITH CABLES1 AND TDRD7</scope>
</reference>
<reference key="3">
    <citation type="journal article" date="2009" name="Immunity">
        <title>The phagosomal proteome in interferon-gamma-activated macrophages.</title>
        <authorList>
            <person name="Trost M."/>
            <person name="English L."/>
            <person name="Lemieux S."/>
            <person name="Courcelles M."/>
            <person name="Desjardins M."/>
            <person name="Thibault P."/>
        </authorList>
    </citation>
    <scope>PHOSPHORYLATION [LARGE SCALE ANALYSIS] AT SER-137; SER-165 AND SER-180</scope>
    <scope>IDENTIFICATION BY MASS SPECTROMETRY [LARGE SCALE ANALYSIS]</scope>
</reference>
<reference key="4">
    <citation type="journal article" date="2010" name="Cell">
        <title>A tissue-specific atlas of mouse protein phosphorylation and expression.</title>
        <authorList>
            <person name="Huttlin E.L."/>
            <person name="Jedrychowski M.P."/>
            <person name="Elias J.E."/>
            <person name="Goswami T."/>
            <person name="Rad R."/>
            <person name="Beausoleil S.A."/>
            <person name="Villen J."/>
            <person name="Haas W."/>
            <person name="Sowa M.E."/>
            <person name="Gygi S.P."/>
        </authorList>
    </citation>
    <scope>PHOSPHORYLATION [LARGE SCALE ANALYSIS] AT SER-180</scope>
    <scope>IDENTIFICATION BY MASS SPECTROMETRY [LARGE SCALE ANALYSIS]</scope>
    <source>
        <tissue>Brain</tissue>
        <tissue>Brown adipose tissue</tissue>
        <tissue>Heart</tissue>
        <tissue>Kidney</tissue>
        <tissue>Lung</tissue>
        <tissue>Pancreas</tissue>
        <tissue>Spleen</tissue>
    </source>
</reference>
<sequence length="523" mass="59506">MKKFKRRLSLTLRGSQTIDESLSELAEQMTIEESSSKDNEPIVKNGRPPTSHSVHSFLHQYTGSFKKPPLRRPHSVIGGSLGSFMAMPRNGSRLDIVHENLKMGSDGESDQASGTSSDEVQSPTGVCLRNRIHRRISMEDLNKRLSLPADIRIPDGYLEKLQISSPPFDQPMSRRSRRASLSEIGFGKMETYIKLEKLGEGTYATVYKGRSKLTENLVALKEIRLEHEEGAPCTAIREVSLLKDLKHANIVTLHDIVHTDKSLTLVFEYLDKDLKQYMDDCGNIMSMHNVKLFLYQILRGLAYCHRRKVLHRDLKPQNLLINERGELKLADFGLARAKSVPTKTYSNEVVTLWYRPPDVLLGSSEYSTQIDMWGVGCIFFEMASGRPLFPGSTVEDELHLIFRLLGTPSQETWPGVSSNDEFKNYNFPKYKPQPLINHAPRLDSEGIELITKFLQYESKKRVPAEEAMKHVYFRSLGPRIHALPESVSIFSLKEIQLQKDPGFRNSSYPETGHGKNRRQSMLF</sequence>
<evidence type="ECO:0000250" key="1"/>
<evidence type="ECO:0000250" key="2">
    <source>
        <dbReference type="UniProtKB" id="Q00537"/>
    </source>
</evidence>
<evidence type="ECO:0000255" key="3">
    <source>
        <dbReference type="PROSITE-ProRule" id="PRU00159"/>
    </source>
</evidence>
<evidence type="ECO:0000255" key="4">
    <source>
        <dbReference type="PROSITE-ProRule" id="PRU10027"/>
    </source>
</evidence>
<evidence type="ECO:0000256" key="5">
    <source>
        <dbReference type="SAM" id="MobiDB-lite"/>
    </source>
</evidence>
<evidence type="ECO:0000269" key="6">
    <source>
    </source>
</evidence>
<evidence type="ECO:0000303" key="7">
    <source>
    </source>
</evidence>
<evidence type="ECO:0000305" key="8"/>
<evidence type="ECO:0007744" key="9">
    <source>
    </source>
</evidence>
<evidence type="ECO:0007744" key="10">
    <source>
    </source>
</evidence>
<protein>
    <recommendedName>
        <fullName>Cyclin-dependent kinase 17</fullName>
        <ecNumber>2.7.11.22</ecNumber>
    </recommendedName>
    <alternativeName>
        <fullName>Cell division protein kinase 17</fullName>
    </alternativeName>
    <alternativeName>
        <fullName>PCTAIRE-motif protein kinase 2</fullName>
    </alternativeName>
    <alternativeName>
        <fullName>Serine/threonine-protein kinase PCTAIRE-2</fullName>
    </alternativeName>
</protein>
<name>CDK17_MOUSE</name>
<comment type="function">
    <text evidence="1">May play a role in terminally differentiated neurons. Has a Ser/Thr-phosphorylating activity for histone H1 (By similarity).</text>
</comment>
<comment type="catalytic activity">
    <reaction>
        <text>L-seryl-[protein] + ATP = O-phospho-L-seryl-[protein] + ADP + H(+)</text>
        <dbReference type="Rhea" id="RHEA:17989"/>
        <dbReference type="Rhea" id="RHEA-COMP:9863"/>
        <dbReference type="Rhea" id="RHEA-COMP:11604"/>
        <dbReference type="ChEBI" id="CHEBI:15378"/>
        <dbReference type="ChEBI" id="CHEBI:29999"/>
        <dbReference type="ChEBI" id="CHEBI:30616"/>
        <dbReference type="ChEBI" id="CHEBI:83421"/>
        <dbReference type="ChEBI" id="CHEBI:456216"/>
        <dbReference type="EC" id="2.7.11.22"/>
    </reaction>
</comment>
<comment type="catalytic activity">
    <reaction>
        <text>L-threonyl-[protein] + ATP = O-phospho-L-threonyl-[protein] + ADP + H(+)</text>
        <dbReference type="Rhea" id="RHEA:46608"/>
        <dbReference type="Rhea" id="RHEA-COMP:11060"/>
        <dbReference type="Rhea" id="RHEA-COMP:11605"/>
        <dbReference type="ChEBI" id="CHEBI:15378"/>
        <dbReference type="ChEBI" id="CHEBI:30013"/>
        <dbReference type="ChEBI" id="CHEBI:30616"/>
        <dbReference type="ChEBI" id="CHEBI:61977"/>
        <dbReference type="ChEBI" id="CHEBI:456216"/>
        <dbReference type="EC" id="2.7.11.22"/>
    </reaction>
</comment>
<comment type="subunit">
    <text evidence="6">Found in a complex containing CABLES1, CDK16 and TDRD7. Interacts with TDRD7.</text>
</comment>
<comment type="alternative products">
    <event type="alternative splicing"/>
    <isoform>
        <id>Q8K0D0-1</id>
        <name>1</name>
        <sequence type="displayed"/>
    </isoform>
    <isoform>
        <id>Q8K0D0-2</id>
        <name>2</name>
        <sequence type="described" ref="VSP_010640 VSP_010641"/>
    </isoform>
</comment>
<comment type="similarity">
    <text evidence="8">Belongs to the protein kinase superfamily. CMGC Ser/Thr protein kinase family. CDC2/CDKX subfamily.</text>
</comment>
<comment type="sequence caution" evidence="8">
    <conflict type="erroneous initiation">
        <sequence resource="EMBL-CDS" id="AAH31778"/>
    </conflict>
</comment>